<protein>
    <recommendedName>
        <fullName evidence="1">Holliday junction branch migration complex subunit RuvA</fullName>
    </recommendedName>
</protein>
<accession>B5ZBT6</accession>
<organism>
    <name type="scientific">Ureaplasma urealyticum serovar 10 (strain ATCC 33699 / Western)</name>
    <dbReference type="NCBI Taxonomy" id="565575"/>
    <lineage>
        <taxon>Bacteria</taxon>
        <taxon>Bacillati</taxon>
        <taxon>Mycoplasmatota</taxon>
        <taxon>Mycoplasmoidales</taxon>
        <taxon>Mycoplasmoidaceae</taxon>
        <taxon>Ureaplasma</taxon>
    </lineage>
</organism>
<feature type="chain" id="PRO_1000195182" description="Holliday junction branch migration complex subunit RuvA">
    <location>
        <begin position="1"/>
        <end position="195"/>
    </location>
</feature>
<feature type="region of interest" description="Domain I" evidence="1">
    <location>
        <begin position="1"/>
        <end position="66"/>
    </location>
</feature>
<feature type="region of interest" description="Domain II" evidence="1">
    <location>
        <begin position="67"/>
        <end position="141"/>
    </location>
</feature>
<feature type="region of interest" description="Domain III" evidence="1">
    <location>
        <begin position="141"/>
        <end position="195"/>
    </location>
</feature>
<feature type="region of interest" description="Flexible linker" evidence="1">
    <location>
        <position position="141"/>
    </location>
</feature>
<keyword id="KW-0963">Cytoplasm</keyword>
<keyword id="KW-0227">DNA damage</keyword>
<keyword id="KW-0233">DNA recombination</keyword>
<keyword id="KW-0234">DNA repair</keyword>
<keyword id="KW-0238">DNA-binding</keyword>
<name>RUVA_UREU1</name>
<evidence type="ECO:0000255" key="1">
    <source>
        <dbReference type="HAMAP-Rule" id="MF_00031"/>
    </source>
</evidence>
<gene>
    <name evidence="1" type="primary">ruvA</name>
    <name type="ordered locus">UUR10_0484</name>
</gene>
<comment type="function">
    <text evidence="1">The RuvA-RuvB-RuvC complex processes Holliday junction (HJ) DNA during genetic recombination and DNA repair, while the RuvA-RuvB complex plays an important role in the rescue of blocked DNA replication forks via replication fork reversal (RFR). RuvA specifically binds to HJ cruciform DNA, conferring on it an open structure. The RuvB hexamer acts as an ATP-dependent pump, pulling dsDNA into and through the RuvAB complex. HJ branch migration allows RuvC to scan DNA until it finds its consensus sequence, where it cleaves and resolves the cruciform DNA.</text>
</comment>
<comment type="subunit">
    <text evidence="1">Homotetramer. Forms an RuvA(8)-RuvB(12)-Holliday junction (HJ) complex. HJ DNA is sandwiched between 2 RuvA tetramers; dsDNA enters through RuvA and exits via RuvB. An RuvB hexamer assembles on each DNA strand where it exits the tetramer. Each RuvB hexamer is contacted by two RuvA subunits (via domain III) on 2 adjacent RuvB subunits; this complex drives branch migration. In the full resolvosome a probable DNA-RuvA(4)-RuvB(12)-RuvC(2) complex forms which resolves the HJ.</text>
</comment>
<comment type="subcellular location">
    <subcellularLocation>
        <location evidence="1">Cytoplasm</location>
    </subcellularLocation>
</comment>
<comment type="domain">
    <text evidence="1">Has three domains with a flexible linker between the domains II and III and assumes an 'L' shape. Domain III is highly mobile and contacts RuvB.</text>
</comment>
<comment type="similarity">
    <text evidence="1">Belongs to the RuvA family.</text>
</comment>
<proteinExistence type="inferred from homology"/>
<sequence length="195" mass="22512">MNYLVFKVIYANANVVIGEHNFIGYQIRVPKDYELEVNKFCKLYLYEYASIMPNKNLIIKDLYGFRTYNERLLFIDLISINSIGPKTAINILKYDINLIIDAIATKDVDFLATIKGVNQRSANLICDQLNYKYINKVSEKNPWAKELSIGLENLGYDKKDIEYAITKVKVDTQQNIDISEIIGCAIKEISLRHEN</sequence>
<dbReference type="EMBL" id="CP001184">
    <property type="protein sequence ID" value="ACI60096.1"/>
    <property type="molecule type" value="Genomic_DNA"/>
</dbReference>
<dbReference type="RefSeq" id="WP_004025753.1">
    <property type="nucleotide sequence ID" value="NC_011374.1"/>
</dbReference>
<dbReference type="SMR" id="B5ZBT6"/>
<dbReference type="STRING" id="565575.UUR10_0484"/>
<dbReference type="GeneID" id="93848956"/>
<dbReference type="KEGG" id="uue:UUR10_0484"/>
<dbReference type="eggNOG" id="COG0632">
    <property type="taxonomic scope" value="Bacteria"/>
</dbReference>
<dbReference type="HOGENOM" id="CLU_087936_1_1_14"/>
<dbReference type="OrthoDB" id="5293449at2"/>
<dbReference type="Proteomes" id="UP000002018">
    <property type="component" value="Chromosome"/>
</dbReference>
<dbReference type="GO" id="GO:0005737">
    <property type="term" value="C:cytoplasm"/>
    <property type="evidence" value="ECO:0007669"/>
    <property type="project" value="UniProtKB-SubCell"/>
</dbReference>
<dbReference type="GO" id="GO:0009379">
    <property type="term" value="C:Holliday junction helicase complex"/>
    <property type="evidence" value="ECO:0007669"/>
    <property type="project" value="InterPro"/>
</dbReference>
<dbReference type="GO" id="GO:0048476">
    <property type="term" value="C:Holliday junction resolvase complex"/>
    <property type="evidence" value="ECO:0007669"/>
    <property type="project" value="UniProtKB-UniRule"/>
</dbReference>
<dbReference type="GO" id="GO:0005524">
    <property type="term" value="F:ATP binding"/>
    <property type="evidence" value="ECO:0007669"/>
    <property type="project" value="InterPro"/>
</dbReference>
<dbReference type="GO" id="GO:0000400">
    <property type="term" value="F:four-way junction DNA binding"/>
    <property type="evidence" value="ECO:0007669"/>
    <property type="project" value="UniProtKB-UniRule"/>
</dbReference>
<dbReference type="GO" id="GO:0009378">
    <property type="term" value="F:four-way junction helicase activity"/>
    <property type="evidence" value="ECO:0007669"/>
    <property type="project" value="InterPro"/>
</dbReference>
<dbReference type="GO" id="GO:0006310">
    <property type="term" value="P:DNA recombination"/>
    <property type="evidence" value="ECO:0007669"/>
    <property type="project" value="UniProtKB-UniRule"/>
</dbReference>
<dbReference type="GO" id="GO:0006281">
    <property type="term" value="P:DNA repair"/>
    <property type="evidence" value="ECO:0007669"/>
    <property type="project" value="UniProtKB-UniRule"/>
</dbReference>
<dbReference type="Gene3D" id="1.10.150.20">
    <property type="entry name" value="5' to 3' exonuclease, C-terminal subdomain"/>
    <property type="match status" value="1"/>
</dbReference>
<dbReference type="HAMAP" id="MF_00031">
    <property type="entry name" value="DNA_HJ_migration_RuvA"/>
    <property type="match status" value="1"/>
</dbReference>
<dbReference type="InterPro" id="IPR000085">
    <property type="entry name" value="RuvA"/>
</dbReference>
<dbReference type="InterPro" id="IPR010994">
    <property type="entry name" value="RuvA_2-like"/>
</dbReference>
<dbReference type="InterPro" id="IPR011114">
    <property type="entry name" value="RuvA_C"/>
</dbReference>
<dbReference type="NCBIfam" id="TIGR00084">
    <property type="entry name" value="ruvA"/>
    <property type="match status" value="1"/>
</dbReference>
<dbReference type="Pfam" id="PF14520">
    <property type="entry name" value="HHH_5"/>
    <property type="match status" value="1"/>
</dbReference>
<dbReference type="Pfam" id="PF07499">
    <property type="entry name" value="RuvA_C"/>
    <property type="match status" value="1"/>
</dbReference>
<dbReference type="SUPFAM" id="SSF47781">
    <property type="entry name" value="RuvA domain 2-like"/>
    <property type="match status" value="1"/>
</dbReference>
<reference key="1">
    <citation type="submission" date="2008-10" db="EMBL/GenBank/DDBJ databases">
        <title>Genome sequence of Ureaplasma urealyticum serovar 10 ATCC-33699.</title>
        <authorList>
            <person name="Shrivastava S."/>
            <person name="Methe B.A."/>
            <person name="Glass J."/>
            <person name="White K."/>
            <person name="Duffy L.B."/>
        </authorList>
    </citation>
    <scope>NUCLEOTIDE SEQUENCE [LARGE SCALE GENOMIC DNA]</scope>
    <source>
        <strain>ATCC 33699 / Western</strain>
    </source>
</reference>